<reference key="1">
    <citation type="journal article" date="2002" name="Nature">
        <title>Comparison of the genomes of two Xanthomonas pathogens with differing host specificities.</title>
        <authorList>
            <person name="da Silva A.C.R."/>
            <person name="Ferro J.A."/>
            <person name="Reinach F.C."/>
            <person name="Farah C.S."/>
            <person name="Furlan L.R."/>
            <person name="Quaggio R.B."/>
            <person name="Monteiro-Vitorello C.B."/>
            <person name="Van Sluys M.A."/>
            <person name="Almeida N.F. Jr."/>
            <person name="Alves L.M.C."/>
            <person name="do Amaral A.M."/>
            <person name="Bertolini M.C."/>
            <person name="Camargo L.E.A."/>
            <person name="Camarotte G."/>
            <person name="Cannavan F."/>
            <person name="Cardozo J."/>
            <person name="Chambergo F."/>
            <person name="Ciapina L.P."/>
            <person name="Cicarelli R.M.B."/>
            <person name="Coutinho L.L."/>
            <person name="Cursino-Santos J.R."/>
            <person name="El-Dorry H."/>
            <person name="Faria J.B."/>
            <person name="Ferreira A.J.S."/>
            <person name="Ferreira R.C.C."/>
            <person name="Ferro M.I.T."/>
            <person name="Formighieri E.F."/>
            <person name="Franco M.C."/>
            <person name="Greggio C.C."/>
            <person name="Gruber A."/>
            <person name="Katsuyama A.M."/>
            <person name="Kishi L.T."/>
            <person name="Leite R.P."/>
            <person name="Lemos E.G.M."/>
            <person name="Lemos M.V.F."/>
            <person name="Locali E.C."/>
            <person name="Machado M.A."/>
            <person name="Madeira A.M.B.N."/>
            <person name="Martinez-Rossi N.M."/>
            <person name="Martins E.C."/>
            <person name="Meidanis J."/>
            <person name="Menck C.F.M."/>
            <person name="Miyaki C.Y."/>
            <person name="Moon D.H."/>
            <person name="Moreira L.M."/>
            <person name="Novo M.T.M."/>
            <person name="Okura V.K."/>
            <person name="Oliveira M.C."/>
            <person name="Oliveira V.R."/>
            <person name="Pereira H.A."/>
            <person name="Rossi A."/>
            <person name="Sena J.A.D."/>
            <person name="Silva C."/>
            <person name="de Souza R.F."/>
            <person name="Spinola L.A.F."/>
            <person name="Takita M.A."/>
            <person name="Tamura R.E."/>
            <person name="Teixeira E.C."/>
            <person name="Tezza R.I.D."/>
            <person name="Trindade dos Santos M."/>
            <person name="Truffi D."/>
            <person name="Tsai S.M."/>
            <person name="White F.F."/>
            <person name="Setubal J.C."/>
            <person name="Kitajima J.P."/>
        </authorList>
    </citation>
    <scope>NUCLEOTIDE SEQUENCE [LARGE SCALE GENOMIC DNA]</scope>
    <source>
        <strain>ATCC 33913 / DSM 3586 / NCPPB 528 / LMG 568 / P 25</strain>
    </source>
</reference>
<comment type="catalytic activity">
    <reaction evidence="1">
        <text>tRNA(Gly) + glycine + ATP = glycyl-tRNA(Gly) + AMP + diphosphate</text>
        <dbReference type="Rhea" id="RHEA:16013"/>
        <dbReference type="Rhea" id="RHEA-COMP:9664"/>
        <dbReference type="Rhea" id="RHEA-COMP:9683"/>
        <dbReference type="ChEBI" id="CHEBI:30616"/>
        <dbReference type="ChEBI" id="CHEBI:33019"/>
        <dbReference type="ChEBI" id="CHEBI:57305"/>
        <dbReference type="ChEBI" id="CHEBI:78442"/>
        <dbReference type="ChEBI" id="CHEBI:78522"/>
        <dbReference type="ChEBI" id="CHEBI:456215"/>
        <dbReference type="EC" id="6.1.1.14"/>
    </reaction>
</comment>
<comment type="subunit">
    <text evidence="1">Tetramer of two alpha and two beta subunits.</text>
</comment>
<comment type="subcellular location">
    <subcellularLocation>
        <location evidence="1">Cytoplasm</location>
    </subcellularLocation>
</comment>
<comment type="similarity">
    <text evidence="1">Belongs to the class-II aminoacyl-tRNA synthetase family.</text>
</comment>
<sequence>MSDSRRVPITFQGLIQTLNQYWAEQGCVLIQPLDLEVGAGTFHPATFLRALGPEPWNAAYVQPSRRPTDGRYGENPNRLQRYYQYQVAMKPNPDNIQDLYLGSLKALGIDPLVHDLRFVEDNWESPTLGAWGLGWEVWLNGMEVTQFTYFQQAGGLECKPVLGEITYGLERLCMYLQSCDNVYDLVWTYGPDGTPVTYGDVYHQNEVEQSAYNFEHANVEELFHRFDACEAEAKHLVEVGLPLPAYEQVTKASHAFNLLDARRAISVTERQRYILRVRALAQGVAQAYYAQREKLGFPGVKK</sequence>
<dbReference type="EC" id="6.1.1.14" evidence="1"/>
<dbReference type="EMBL" id="AE008922">
    <property type="protein sequence ID" value="AAM43308.1"/>
    <property type="molecule type" value="Genomic_DNA"/>
</dbReference>
<dbReference type="RefSeq" id="NP_639426.1">
    <property type="nucleotide sequence ID" value="NC_003902.1"/>
</dbReference>
<dbReference type="RefSeq" id="WP_011039156.1">
    <property type="nucleotide sequence ID" value="NC_003902.1"/>
</dbReference>
<dbReference type="SMR" id="Q8P3I4"/>
<dbReference type="STRING" id="190485.XCC4087"/>
<dbReference type="EnsemblBacteria" id="AAM43308">
    <property type="protein sequence ID" value="AAM43308"/>
    <property type="gene ID" value="XCC4087"/>
</dbReference>
<dbReference type="KEGG" id="xcc:XCC4087"/>
<dbReference type="PATRIC" id="fig|190485.4.peg.4380"/>
<dbReference type="eggNOG" id="COG0752">
    <property type="taxonomic scope" value="Bacteria"/>
</dbReference>
<dbReference type="HOGENOM" id="CLU_057066_1_0_6"/>
<dbReference type="OrthoDB" id="9802183at2"/>
<dbReference type="Proteomes" id="UP000001010">
    <property type="component" value="Chromosome"/>
</dbReference>
<dbReference type="GO" id="GO:0005737">
    <property type="term" value="C:cytoplasm"/>
    <property type="evidence" value="ECO:0007669"/>
    <property type="project" value="UniProtKB-SubCell"/>
</dbReference>
<dbReference type="GO" id="GO:0005524">
    <property type="term" value="F:ATP binding"/>
    <property type="evidence" value="ECO:0007669"/>
    <property type="project" value="UniProtKB-UniRule"/>
</dbReference>
<dbReference type="GO" id="GO:0004820">
    <property type="term" value="F:glycine-tRNA ligase activity"/>
    <property type="evidence" value="ECO:0007669"/>
    <property type="project" value="UniProtKB-UniRule"/>
</dbReference>
<dbReference type="GO" id="GO:0006426">
    <property type="term" value="P:glycyl-tRNA aminoacylation"/>
    <property type="evidence" value="ECO:0007669"/>
    <property type="project" value="UniProtKB-UniRule"/>
</dbReference>
<dbReference type="CDD" id="cd00733">
    <property type="entry name" value="GlyRS_alpha_core"/>
    <property type="match status" value="1"/>
</dbReference>
<dbReference type="FunFam" id="3.30.930.10:FF:000006">
    <property type="entry name" value="Glycine--tRNA ligase alpha subunit"/>
    <property type="match status" value="1"/>
</dbReference>
<dbReference type="Gene3D" id="3.30.930.10">
    <property type="entry name" value="Bira Bifunctional Protein, Domain 2"/>
    <property type="match status" value="1"/>
</dbReference>
<dbReference type="Gene3D" id="1.20.58.180">
    <property type="entry name" value="Class II aaRS and biotin synthetases, domain 2"/>
    <property type="match status" value="1"/>
</dbReference>
<dbReference type="HAMAP" id="MF_00254">
    <property type="entry name" value="Gly_tRNA_synth_alpha"/>
    <property type="match status" value="1"/>
</dbReference>
<dbReference type="InterPro" id="IPR045864">
    <property type="entry name" value="aa-tRNA-synth_II/BPL/LPL"/>
</dbReference>
<dbReference type="InterPro" id="IPR006194">
    <property type="entry name" value="Gly-tRNA-synth_heterodimer"/>
</dbReference>
<dbReference type="InterPro" id="IPR002310">
    <property type="entry name" value="Gly-tRNA_ligase_asu"/>
</dbReference>
<dbReference type="NCBIfam" id="TIGR00388">
    <property type="entry name" value="glyQ"/>
    <property type="match status" value="1"/>
</dbReference>
<dbReference type="NCBIfam" id="NF006827">
    <property type="entry name" value="PRK09348.1"/>
    <property type="match status" value="1"/>
</dbReference>
<dbReference type="PANTHER" id="PTHR30075:SF2">
    <property type="entry name" value="GLYCINE--TRNA LIGASE, CHLOROPLASTIC_MITOCHONDRIAL 2"/>
    <property type="match status" value="1"/>
</dbReference>
<dbReference type="PANTHER" id="PTHR30075">
    <property type="entry name" value="GLYCYL-TRNA SYNTHETASE"/>
    <property type="match status" value="1"/>
</dbReference>
<dbReference type="Pfam" id="PF02091">
    <property type="entry name" value="tRNA-synt_2e"/>
    <property type="match status" value="1"/>
</dbReference>
<dbReference type="PRINTS" id="PR01044">
    <property type="entry name" value="TRNASYNTHGA"/>
</dbReference>
<dbReference type="SUPFAM" id="SSF55681">
    <property type="entry name" value="Class II aaRS and biotin synthetases"/>
    <property type="match status" value="1"/>
</dbReference>
<dbReference type="PROSITE" id="PS50861">
    <property type="entry name" value="AA_TRNA_LIGASE_II_GLYAB"/>
    <property type="match status" value="1"/>
</dbReference>
<feature type="chain" id="PRO_0000072884" description="Glycine--tRNA ligase alpha subunit">
    <location>
        <begin position="1"/>
        <end position="302"/>
    </location>
</feature>
<proteinExistence type="inferred from homology"/>
<evidence type="ECO:0000255" key="1">
    <source>
        <dbReference type="HAMAP-Rule" id="MF_00254"/>
    </source>
</evidence>
<gene>
    <name evidence="1" type="primary">glyQ</name>
    <name type="ordered locus">XCC4087</name>
</gene>
<protein>
    <recommendedName>
        <fullName evidence="1">Glycine--tRNA ligase alpha subunit</fullName>
        <ecNumber evidence="1">6.1.1.14</ecNumber>
    </recommendedName>
    <alternativeName>
        <fullName evidence="1">Glycyl-tRNA synthetase alpha subunit</fullName>
        <shortName evidence="1">GlyRS</shortName>
    </alternativeName>
</protein>
<organism>
    <name type="scientific">Xanthomonas campestris pv. campestris (strain ATCC 33913 / DSM 3586 / NCPPB 528 / LMG 568 / P 25)</name>
    <dbReference type="NCBI Taxonomy" id="190485"/>
    <lineage>
        <taxon>Bacteria</taxon>
        <taxon>Pseudomonadati</taxon>
        <taxon>Pseudomonadota</taxon>
        <taxon>Gammaproteobacteria</taxon>
        <taxon>Lysobacterales</taxon>
        <taxon>Lysobacteraceae</taxon>
        <taxon>Xanthomonas</taxon>
    </lineage>
</organism>
<accession>Q8P3I4</accession>
<keyword id="KW-0030">Aminoacyl-tRNA synthetase</keyword>
<keyword id="KW-0067">ATP-binding</keyword>
<keyword id="KW-0963">Cytoplasm</keyword>
<keyword id="KW-0436">Ligase</keyword>
<keyword id="KW-0547">Nucleotide-binding</keyword>
<keyword id="KW-0648">Protein biosynthesis</keyword>
<keyword id="KW-1185">Reference proteome</keyword>
<name>SYGA_XANCP</name>